<feature type="chain" id="PRO_0000323813" description="Uridylate kinase">
    <location>
        <begin position="1"/>
        <end position="237"/>
    </location>
</feature>
<feature type="binding site" evidence="1">
    <location>
        <begin position="11"/>
        <end position="14"/>
    </location>
    <ligand>
        <name>ATP</name>
        <dbReference type="ChEBI" id="CHEBI:30616"/>
    </ligand>
</feature>
<feature type="binding site" evidence="1">
    <location>
        <position position="53"/>
    </location>
    <ligand>
        <name>UMP</name>
        <dbReference type="ChEBI" id="CHEBI:57865"/>
    </ligand>
</feature>
<feature type="binding site" evidence="1">
    <location>
        <position position="54"/>
    </location>
    <ligand>
        <name>ATP</name>
        <dbReference type="ChEBI" id="CHEBI:30616"/>
    </ligand>
</feature>
<feature type="binding site" evidence="1">
    <location>
        <position position="58"/>
    </location>
    <ligand>
        <name>ATP</name>
        <dbReference type="ChEBI" id="CHEBI:30616"/>
    </ligand>
</feature>
<feature type="binding site" evidence="1">
    <location>
        <position position="73"/>
    </location>
    <ligand>
        <name>UMP</name>
        <dbReference type="ChEBI" id="CHEBI:57865"/>
    </ligand>
</feature>
<feature type="binding site" evidence="1">
    <location>
        <begin position="134"/>
        <end position="141"/>
    </location>
    <ligand>
        <name>UMP</name>
        <dbReference type="ChEBI" id="CHEBI:57865"/>
    </ligand>
</feature>
<feature type="binding site" evidence="1">
    <location>
        <position position="161"/>
    </location>
    <ligand>
        <name>ATP</name>
        <dbReference type="ChEBI" id="CHEBI:30616"/>
    </ligand>
</feature>
<feature type="binding site" evidence="1">
    <location>
        <position position="167"/>
    </location>
    <ligand>
        <name>ATP</name>
        <dbReference type="ChEBI" id="CHEBI:30616"/>
    </ligand>
</feature>
<feature type="binding site" evidence="1">
    <location>
        <position position="170"/>
    </location>
    <ligand>
        <name>ATP</name>
        <dbReference type="ChEBI" id="CHEBI:30616"/>
    </ligand>
</feature>
<protein>
    <recommendedName>
        <fullName evidence="1">Uridylate kinase</fullName>
        <shortName evidence="1">UK</shortName>
        <ecNumber evidence="1">2.7.4.22</ecNumber>
    </recommendedName>
    <alternativeName>
        <fullName evidence="1">Uridine monophosphate kinase</fullName>
        <shortName evidence="1">UMP kinase</shortName>
        <shortName evidence="1">UMPK</shortName>
    </alternativeName>
</protein>
<reference key="1">
    <citation type="journal article" date="2010" name="Genome Biol. Evol.">
        <title>Continuing evolution of Burkholderia mallei through genome reduction and large-scale rearrangements.</title>
        <authorList>
            <person name="Losada L."/>
            <person name="Ronning C.M."/>
            <person name="DeShazer D."/>
            <person name="Woods D."/>
            <person name="Fedorova N."/>
            <person name="Kim H.S."/>
            <person name="Shabalina S.A."/>
            <person name="Pearson T.R."/>
            <person name="Brinkac L."/>
            <person name="Tan P."/>
            <person name="Nandi T."/>
            <person name="Crabtree J."/>
            <person name="Badger J."/>
            <person name="Beckstrom-Sternberg S."/>
            <person name="Saqib M."/>
            <person name="Schutzer S.E."/>
            <person name="Keim P."/>
            <person name="Nierman W.C."/>
        </authorList>
    </citation>
    <scope>NUCLEOTIDE SEQUENCE [LARGE SCALE GENOMIC DNA]</scope>
    <source>
        <strain>1106a</strain>
    </source>
</reference>
<comment type="function">
    <text evidence="1">Catalyzes the reversible phosphorylation of UMP to UDP.</text>
</comment>
<comment type="catalytic activity">
    <reaction evidence="1">
        <text>UMP + ATP = UDP + ADP</text>
        <dbReference type="Rhea" id="RHEA:24400"/>
        <dbReference type="ChEBI" id="CHEBI:30616"/>
        <dbReference type="ChEBI" id="CHEBI:57865"/>
        <dbReference type="ChEBI" id="CHEBI:58223"/>
        <dbReference type="ChEBI" id="CHEBI:456216"/>
        <dbReference type="EC" id="2.7.4.22"/>
    </reaction>
</comment>
<comment type="activity regulation">
    <text evidence="1">Inhibited by UTP.</text>
</comment>
<comment type="pathway">
    <text evidence="1">Pyrimidine metabolism; CTP biosynthesis via de novo pathway; UDP from UMP (UMPK route): step 1/1.</text>
</comment>
<comment type="subunit">
    <text evidence="1">Homohexamer.</text>
</comment>
<comment type="subcellular location">
    <subcellularLocation>
        <location evidence="1">Cytoplasm</location>
    </subcellularLocation>
</comment>
<comment type="similarity">
    <text evidence="1">Belongs to the UMP kinase family.</text>
</comment>
<sequence length="237" mass="25329">MPNAYKRVLLKLSGEALMGDDAFGINRATIERMVADIAEVVRLGTQLAVVIGGGNIFRGVAGGAAGMDRATADYMGMLATMMNALALQDAMRHAGIEARVQSALRMDQVVEPYIRPRAIRQLEEGKVVIFAAGTGNPFFTTDTAAALRGSEVGAEVVLKATKVDGVYSADPKKDPSATRYSSISFDEAIGRNLQVMDATAFALCRDQKLPIRVFSINKPGALKRIVQGEDEGTLVHV</sequence>
<proteinExistence type="inferred from homology"/>
<organism>
    <name type="scientific">Burkholderia pseudomallei (strain 1106a)</name>
    <dbReference type="NCBI Taxonomy" id="357348"/>
    <lineage>
        <taxon>Bacteria</taxon>
        <taxon>Pseudomonadati</taxon>
        <taxon>Pseudomonadota</taxon>
        <taxon>Betaproteobacteria</taxon>
        <taxon>Burkholderiales</taxon>
        <taxon>Burkholderiaceae</taxon>
        <taxon>Burkholderia</taxon>
        <taxon>pseudomallei group</taxon>
    </lineage>
</organism>
<evidence type="ECO:0000255" key="1">
    <source>
        <dbReference type="HAMAP-Rule" id="MF_01220"/>
    </source>
</evidence>
<keyword id="KW-0067">ATP-binding</keyword>
<keyword id="KW-0963">Cytoplasm</keyword>
<keyword id="KW-0418">Kinase</keyword>
<keyword id="KW-0547">Nucleotide-binding</keyword>
<keyword id="KW-0665">Pyrimidine biosynthesis</keyword>
<keyword id="KW-0808">Transferase</keyword>
<accession>A3NWM9</accession>
<gene>
    <name evidence="1" type="primary">pyrH</name>
    <name type="ordered locus">BURPS1106A_2491</name>
</gene>
<dbReference type="EC" id="2.7.4.22" evidence="1"/>
<dbReference type="EMBL" id="CP000572">
    <property type="protein sequence ID" value="ABN88991.1"/>
    <property type="molecule type" value="Genomic_DNA"/>
</dbReference>
<dbReference type="RefSeq" id="WP_004193606.1">
    <property type="nucleotide sequence ID" value="NC_009076.1"/>
</dbReference>
<dbReference type="SMR" id="A3NWM9"/>
<dbReference type="GeneID" id="93060698"/>
<dbReference type="KEGG" id="bpl:BURPS1106A_2491"/>
<dbReference type="HOGENOM" id="CLU_033861_0_0_4"/>
<dbReference type="UniPathway" id="UPA00159">
    <property type="reaction ID" value="UER00275"/>
</dbReference>
<dbReference type="Proteomes" id="UP000006738">
    <property type="component" value="Chromosome I"/>
</dbReference>
<dbReference type="GO" id="GO:0005829">
    <property type="term" value="C:cytosol"/>
    <property type="evidence" value="ECO:0007669"/>
    <property type="project" value="TreeGrafter"/>
</dbReference>
<dbReference type="GO" id="GO:0005524">
    <property type="term" value="F:ATP binding"/>
    <property type="evidence" value="ECO:0007669"/>
    <property type="project" value="UniProtKB-KW"/>
</dbReference>
<dbReference type="GO" id="GO:0033862">
    <property type="term" value="F:UMP kinase activity"/>
    <property type="evidence" value="ECO:0007669"/>
    <property type="project" value="UniProtKB-EC"/>
</dbReference>
<dbReference type="GO" id="GO:0044210">
    <property type="term" value="P:'de novo' CTP biosynthetic process"/>
    <property type="evidence" value="ECO:0007669"/>
    <property type="project" value="UniProtKB-UniRule"/>
</dbReference>
<dbReference type="GO" id="GO:0006225">
    <property type="term" value="P:UDP biosynthetic process"/>
    <property type="evidence" value="ECO:0007669"/>
    <property type="project" value="TreeGrafter"/>
</dbReference>
<dbReference type="CDD" id="cd04254">
    <property type="entry name" value="AAK_UMPK-PyrH-Ec"/>
    <property type="match status" value="1"/>
</dbReference>
<dbReference type="FunFam" id="3.40.1160.10:FF:000001">
    <property type="entry name" value="Uridylate kinase"/>
    <property type="match status" value="1"/>
</dbReference>
<dbReference type="Gene3D" id="3.40.1160.10">
    <property type="entry name" value="Acetylglutamate kinase-like"/>
    <property type="match status" value="1"/>
</dbReference>
<dbReference type="HAMAP" id="MF_01220_B">
    <property type="entry name" value="PyrH_B"/>
    <property type="match status" value="1"/>
</dbReference>
<dbReference type="InterPro" id="IPR036393">
    <property type="entry name" value="AceGlu_kinase-like_sf"/>
</dbReference>
<dbReference type="InterPro" id="IPR001048">
    <property type="entry name" value="Asp/Glu/Uridylate_kinase"/>
</dbReference>
<dbReference type="InterPro" id="IPR011817">
    <property type="entry name" value="Uridylate_kinase"/>
</dbReference>
<dbReference type="InterPro" id="IPR015963">
    <property type="entry name" value="Uridylate_kinase_bac"/>
</dbReference>
<dbReference type="NCBIfam" id="TIGR02075">
    <property type="entry name" value="pyrH_bact"/>
    <property type="match status" value="1"/>
</dbReference>
<dbReference type="PANTHER" id="PTHR42833">
    <property type="entry name" value="URIDYLATE KINASE"/>
    <property type="match status" value="1"/>
</dbReference>
<dbReference type="PANTHER" id="PTHR42833:SF4">
    <property type="entry name" value="URIDYLATE KINASE PUMPKIN, CHLOROPLASTIC"/>
    <property type="match status" value="1"/>
</dbReference>
<dbReference type="Pfam" id="PF00696">
    <property type="entry name" value="AA_kinase"/>
    <property type="match status" value="1"/>
</dbReference>
<dbReference type="PIRSF" id="PIRSF005650">
    <property type="entry name" value="Uridylate_kin"/>
    <property type="match status" value="1"/>
</dbReference>
<dbReference type="SUPFAM" id="SSF53633">
    <property type="entry name" value="Carbamate kinase-like"/>
    <property type="match status" value="1"/>
</dbReference>
<name>PYRH_BURP0</name>